<name>EFTU_FRAAA</name>
<reference key="1">
    <citation type="journal article" date="2007" name="Genome Res.">
        <title>Genome characteristics of facultatively symbiotic Frankia sp. strains reflect host range and host plant biogeography.</title>
        <authorList>
            <person name="Normand P."/>
            <person name="Lapierre P."/>
            <person name="Tisa L.S."/>
            <person name="Gogarten J.P."/>
            <person name="Alloisio N."/>
            <person name="Bagnarol E."/>
            <person name="Bassi C.A."/>
            <person name="Berry A.M."/>
            <person name="Bickhart D.M."/>
            <person name="Choisne N."/>
            <person name="Couloux A."/>
            <person name="Cournoyer B."/>
            <person name="Cruveiller S."/>
            <person name="Daubin V."/>
            <person name="Demange N."/>
            <person name="Francino M.P."/>
            <person name="Goltsman E."/>
            <person name="Huang Y."/>
            <person name="Kopp O.R."/>
            <person name="Labarre L."/>
            <person name="Lapidus A."/>
            <person name="Lavire C."/>
            <person name="Marechal J."/>
            <person name="Martinez M."/>
            <person name="Mastronunzio J.E."/>
            <person name="Mullin B.C."/>
            <person name="Niemann J."/>
            <person name="Pujic P."/>
            <person name="Rawnsley T."/>
            <person name="Rouy Z."/>
            <person name="Schenowitz C."/>
            <person name="Sellstedt A."/>
            <person name="Tavares F."/>
            <person name="Tomkins J.P."/>
            <person name="Vallenet D."/>
            <person name="Valverde C."/>
            <person name="Wall L.G."/>
            <person name="Wang Y."/>
            <person name="Medigue C."/>
            <person name="Benson D.R."/>
        </authorList>
    </citation>
    <scope>NUCLEOTIDE SEQUENCE [LARGE SCALE GENOMIC DNA]</scope>
    <source>
        <strain>DSM 45986 / CECT 9034 / ACN14a</strain>
    </source>
</reference>
<proteinExistence type="inferred from homology"/>
<evidence type="ECO:0000250" key="1"/>
<evidence type="ECO:0000255" key="2">
    <source>
        <dbReference type="HAMAP-Rule" id="MF_00118"/>
    </source>
</evidence>
<feature type="chain" id="PRO_1000015657" description="Elongation factor Tu">
    <location>
        <begin position="1"/>
        <end position="397"/>
    </location>
</feature>
<feature type="domain" description="tr-type G">
    <location>
        <begin position="10"/>
        <end position="206"/>
    </location>
</feature>
<feature type="region of interest" description="G1" evidence="1">
    <location>
        <begin position="19"/>
        <end position="26"/>
    </location>
</feature>
<feature type="region of interest" description="G2" evidence="1">
    <location>
        <begin position="62"/>
        <end position="66"/>
    </location>
</feature>
<feature type="region of interest" description="G3" evidence="1">
    <location>
        <begin position="83"/>
        <end position="86"/>
    </location>
</feature>
<feature type="region of interest" description="G4" evidence="1">
    <location>
        <begin position="138"/>
        <end position="141"/>
    </location>
</feature>
<feature type="region of interest" description="G5" evidence="1">
    <location>
        <begin position="176"/>
        <end position="178"/>
    </location>
</feature>
<feature type="binding site" evidence="2">
    <location>
        <begin position="19"/>
        <end position="26"/>
    </location>
    <ligand>
        <name>GTP</name>
        <dbReference type="ChEBI" id="CHEBI:37565"/>
    </ligand>
</feature>
<feature type="binding site" evidence="2">
    <location>
        <position position="26"/>
    </location>
    <ligand>
        <name>Mg(2+)</name>
        <dbReference type="ChEBI" id="CHEBI:18420"/>
    </ligand>
</feature>
<feature type="binding site" evidence="2">
    <location>
        <begin position="83"/>
        <end position="87"/>
    </location>
    <ligand>
        <name>GTP</name>
        <dbReference type="ChEBI" id="CHEBI:37565"/>
    </ligand>
</feature>
<feature type="binding site" evidence="2">
    <location>
        <begin position="138"/>
        <end position="141"/>
    </location>
    <ligand>
        <name>GTP</name>
        <dbReference type="ChEBI" id="CHEBI:37565"/>
    </ligand>
</feature>
<organism>
    <name type="scientific">Frankia alni (strain DSM 45986 / CECT 9034 / ACN14a)</name>
    <dbReference type="NCBI Taxonomy" id="326424"/>
    <lineage>
        <taxon>Bacteria</taxon>
        <taxon>Bacillati</taxon>
        <taxon>Actinomycetota</taxon>
        <taxon>Actinomycetes</taxon>
        <taxon>Frankiales</taxon>
        <taxon>Frankiaceae</taxon>
        <taxon>Frankia</taxon>
    </lineage>
</organism>
<sequence>MAKQKFERTKPHVNIGTIGHIDHGKTTLTAAITKVLHDAHPDLNPFTPFDQIDKAPEEKARGITISIAHVEYQTDKRHYAHVDCPGHADYIKNMITGAAQMDGAILVVSATDGPMPQTKEHVLLARQVGVPYIVVALNKADMVDDEEILELVELEVRELLSSYEFPGDDVPVIRVSALKALEGDKEWGAKLLELMAAVDDSIPEPQRDIDRPFLMPIEDVFTITGRGTVVTGRVERGIVKVNETVEIVGIKPETTTTTVTGVEMFRKLLDEGRAGDNVGLLLRGIKREDVERGQVIVKPKTITPHTVFEARVYILNKDEGGRHTPFFKNYRPQFYFRTTDVTGVVTLPEGTEMVMPGDNTEMTVELIQPIAMEEGLRFAIREGGRTVGAGQVTKVLK</sequence>
<accession>Q0RRS3</accession>
<protein>
    <recommendedName>
        <fullName evidence="2">Elongation factor Tu</fullName>
        <shortName evidence="2">EF-Tu</shortName>
        <ecNumber evidence="2">3.6.5.3</ecNumber>
    </recommendedName>
</protein>
<gene>
    <name evidence="2" type="primary">tuf</name>
    <name type="ordered locus">FRAAL1079</name>
</gene>
<keyword id="KW-0963">Cytoplasm</keyword>
<keyword id="KW-0251">Elongation factor</keyword>
<keyword id="KW-0342">GTP-binding</keyword>
<keyword id="KW-0378">Hydrolase</keyword>
<keyword id="KW-0460">Magnesium</keyword>
<keyword id="KW-0479">Metal-binding</keyword>
<keyword id="KW-0547">Nucleotide-binding</keyword>
<keyword id="KW-0648">Protein biosynthesis</keyword>
<keyword id="KW-1185">Reference proteome</keyword>
<dbReference type="EC" id="3.6.5.3" evidence="2"/>
<dbReference type="EMBL" id="CT573213">
    <property type="protein sequence ID" value="CAJ59744.1"/>
    <property type="molecule type" value="Genomic_DNA"/>
</dbReference>
<dbReference type="RefSeq" id="WP_009740529.1">
    <property type="nucleotide sequence ID" value="NC_008278.1"/>
</dbReference>
<dbReference type="SMR" id="Q0RRS3"/>
<dbReference type="STRING" id="326424.FRAAL1079"/>
<dbReference type="KEGG" id="fal:FRAAL1079"/>
<dbReference type="eggNOG" id="COG0050">
    <property type="taxonomic scope" value="Bacteria"/>
</dbReference>
<dbReference type="HOGENOM" id="CLU_007265_0_1_11"/>
<dbReference type="OrthoDB" id="9803139at2"/>
<dbReference type="Proteomes" id="UP000000657">
    <property type="component" value="Chromosome"/>
</dbReference>
<dbReference type="GO" id="GO:0005829">
    <property type="term" value="C:cytosol"/>
    <property type="evidence" value="ECO:0007669"/>
    <property type="project" value="TreeGrafter"/>
</dbReference>
<dbReference type="GO" id="GO:0005525">
    <property type="term" value="F:GTP binding"/>
    <property type="evidence" value="ECO:0007669"/>
    <property type="project" value="UniProtKB-UniRule"/>
</dbReference>
<dbReference type="GO" id="GO:0003924">
    <property type="term" value="F:GTPase activity"/>
    <property type="evidence" value="ECO:0007669"/>
    <property type="project" value="InterPro"/>
</dbReference>
<dbReference type="GO" id="GO:0003746">
    <property type="term" value="F:translation elongation factor activity"/>
    <property type="evidence" value="ECO:0007669"/>
    <property type="project" value="UniProtKB-UniRule"/>
</dbReference>
<dbReference type="CDD" id="cd01884">
    <property type="entry name" value="EF_Tu"/>
    <property type="match status" value="1"/>
</dbReference>
<dbReference type="CDD" id="cd03697">
    <property type="entry name" value="EFTU_II"/>
    <property type="match status" value="1"/>
</dbReference>
<dbReference type="CDD" id="cd03707">
    <property type="entry name" value="EFTU_III"/>
    <property type="match status" value="1"/>
</dbReference>
<dbReference type="FunFam" id="2.40.30.10:FF:000001">
    <property type="entry name" value="Elongation factor Tu"/>
    <property type="match status" value="1"/>
</dbReference>
<dbReference type="FunFam" id="3.40.50.300:FF:000003">
    <property type="entry name" value="Elongation factor Tu"/>
    <property type="match status" value="1"/>
</dbReference>
<dbReference type="Gene3D" id="3.40.50.300">
    <property type="entry name" value="P-loop containing nucleotide triphosphate hydrolases"/>
    <property type="match status" value="1"/>
</dbReference>
<dbReference type="Gene3D" id="2.40.30.10">
    <property type="entry name" value="Translation factors"/>
    <property type="match status" value="2"/>
</dbReference>
<dbReference type="HAMAP" id="MF_00118_B">
    <property type="entry name" value="EF_Tu_B"/>
    <property type="match status" value="1"/>
</dbReference>
<dbReference type="InterPro" id="IPR041709">
    <property type="entry name" value="EF-Tu_GTP-bd"/>
</dbReference>
<dbReference type="InterPro" id="IPR050055">
    <property type="entry name" value="EF-Tu_GTPase"/>
</dbReference>
<dbReference type="InterPro" id="IPR004161">
    <property type="entry name" value="EFTu-like_2"/>
</dbReference>
<dbReference type="InterPro" id="IPR033720">
    <property type="entry name" value="EFTU_2"/>
</dbReference>
<dbReference type="InterPro" id="IPR031157">
    <property type="entry name" value="G_TR_CS"/>
</dbReference>
<dbReference type="InterPro" id="IPR027417">
    <property type="entry name" value="P-loop_NTPase"/>
</dbReference>
<dbReference type="InterPro" id="IPR005225">
    <property type="entry name" value="Small_GTP-bd"/>
</dbReference>
<dbReference type="InterPro" id="IPR000795">
    <property type="entry name" value="T_Tr_GTP-bd_dom"/>
</dbReference>
<dbReference type="InterPro" id="IPR009000">
    <property type="entry name" value="Transl_B-barrel_sf"/>
</dbReference>
<dbReference type="InterPro" id="IPR009001">
    <property type="entry name" value="Transl_elong_EF1A/Init_IF2_C"/>
</dbReference>
<dbReference type="InterPro" id="IPR004541">
    <property type="entry name" value="Transl_elong_EFTu/EF1A_bac/org"/>
</dbReference>
<dbReference type="InterPro" id="IPR004160">
    <property type="entry name" value="Transl_elong_EFTu/EF1A_C"/>
</dbReference>
<dbReference type="NCBIfam" id="TIGR00485">
    <property type="entry name" value="EF-Tu"/>
    <property type="match status" value="1"/>
</dbReference>
<dbReference type="NCBIfam" id="NF000766">
    <property type="entry name" value="PRK00049.1"/>
    <property type="match status" value="1"/>
</dbReference>
<dbReference type="NCBIfam" id="NF009372">
    <property type="entry name" value="PRK12735.1"/>
    <property type="match status" value="1"/>
</dbReference>
<dbReference type="NCBIfam" id="NF009373">
    <property type="entry name" value="PRK12736.1"/>
    <property type="match status" value="1"/>
</dbReference>
<dbReference type="NCBIfam" id="TIGR00231">
    <property type="entry name" value="small_GTP"/>
    <property type="match status" value="1"/>
</dbReference>
<dbReference type="PANTHER" id="PTHR43721:SF22">
    <property type="entry name" value="ELONGATION FACTOR TU, MITOCHONDRIAL"/>
    <property type="match status" value="1"/>
</dbReference>
<dbReference type="PANTHER" id="PTHR43721">
    <property type="entry name" value="ELONGATION FACTOR TU-RELATED"/>
    <property type="match status" value="1"/>
</dbReference>
<dbReference type="Pfam" id="PF00009">
    <property type="entry name" value="GTP_EFTU"/>
    <property type="match status" value="1"/>
</dbReference>
<dbReference type="Pfam" id="PF03144">
    <property type="entry name" value="GTP_EFTU_D2"/>
    <property type="match status" value="1"/>
</dbReference>
<dbReference type="Pfam" id="PF03143">
    <property type="entry name" value="GTP_EFTU_D3"/>
    <property type="match status" value="1"/>
</dbReference>
<dbReference type="PRINTS" id="PR00315">
    <property type="entry name" value="ELONGATNFCT"/>
</dbReference>
<dbReference type="SUPFAM" id="SSF50465">
    <property type="entry name" value="EF-Tu/eEF-1alpha/eIF2-gamma C-terminal domain"/>
    <property type="match status" value="1"/>
</dbReference>
<dbReference type="SUPFAM" id="SSF52540">
    <property type="entry name" value="P-loop containing nucleoside triphosphate hydrolases"/>
    <property type="match status" value="1"/>
</dbReference>
<dbReference type="SUPFAM" id="SSF50447">
    <property type="entry name" value="Translation proteins"/>
    <property type="match status" value="1"/>
</dbReference>
<dbReference type="PROSITE" id="PS00301">
    <property type="entry name" value="G_TR_1"/>
    <property type="match status" value="1"/>
</dbReference>
<dbReference type="PROSITE" id="PS51722">
    <property type="entry name" value="G_TR_2"/>
    <property type="match status" value="1"/>
</dbReference>
<comment type="function">
    <text evidence="2">GTP hydrolase that promotes the GTP-dependent binding of aminoacyl-tRNA to the A-site of ribosomes during protein biosynthesis.</text>
</comment>
<comment type="catalytic activity">
    <reaction evidence="2">
        <text>GTP + H2O = GDP + phosphate + H(+)</text>
        <dbReference type="Rhea" id="RHEA:19669"/>
        <dbReference type="ChEBI" id="CHEBI:15377"/>
        <dbReference type="ChEBI" id="CHEBI:15378"/>
        <dbReference type="ChEBI" id="CHEBI:37565"/>
        <dbReference type="ChEBI" id="CHEBI:43474"/>
        <dbReference type="ChEBI" id="CHEBI:58189"/>
        <dbReference type="EC" id="3.6.5.3"/>
    </reaction>
    <physiologicalReaction direction="left-to-right" evidence="2">
        <dbReference type="Rhea" id="RHEA:19670"/>
    </physiologicalReaction>
</comment>
<comment type="subunit">
    <text evidence="2">Monomer.</text>
</comment>
<comment type="subcellular location">
    <subcellularLocation>
        <location evidence="2">Cytoplasm</location>
    </subcellularLocation>
</comment>
<comment type="similarity">
    <text evidence="2">Belongs to the TRAFAC class translation factor GTPase superfamily. Classic translation factor GTPase family. EF-Tu/EF-1A subfamily.</text>
</comment>